<feature type="chain" id="PRO_1000073460" description="Iron-sulfur cluster insertion protein ErpA">
    <location>
        <begin position="1"/>
        <end position="113"/>
    </location>
</feature>
<feature type="binding site" evidence="1">
    <location>
        <position position="41"/>
    </location>
    <ligand>
        <name>iron-sulfur cluster</name>
        <dbReference type="ChEBI" id="CHEBI:30408"/>
    </ligand>
</feature>
<feature type="binding site" evidence="1">
    <location>
        <position position="105"/>
    </location>
    <ligand>
        <name>iron-sulfur cluster</name>
        <dbReference type="ChEBI" id="CHEBI:30408"/>
    </ligand>
</feature>
<feature type="binding site" evidence="1">
    <location>
        <position position="107"/>
    </location>
    <ligand>
        <name>iron-sulfur cluster</name>
        <dbReference type="ChEBI" id="CHEBI:30408"/>
    </ligand>
</feature>
<evidence type="ECO:0000255" key="1">
    <source>
        <dbReference type="HAMAP-Rule" id="MF_01380"/>
    </source>
</evidence>
<proteinExistence type="inferred from homology"/>
<gene>
    <name evidence="1" type="primary">erpA</name>
    <name type="ordered locus">Asuc_1030</name>
</gene>
<keyword id="KW-0408">Iron</keyword>
<keyword id="KW-0411">Iron-sulfur</keyword>
<keyword id="KW-0479">Metal-binding</keyword>
<keyword id="KW-1185">Reference proteome</keyword>
<sequence length="113" mass="12027">MTDISVPLTFTDAAANKVKSLITDEENPNLKLRVYITGGGCSGFQYGFTFDEKVNEGDLTVENAGVQLVIDPMSLQYLIGGTVDYTEGLEGSRFVVQNPNASSTCGCGSSFSI</sequence>
<name>ERPA_ACTSZ</name>
<organism>
    <name type="scientific">Actinobacillus succinogenes (strain ATCC 55618 / DSM 22257 / CCUG 43843 / 130Z)</name>
    <dbReference type="NCBI Taxonomy" id="339671"/>
    <lineage>
        <taxon>Bacteria</taxon>
        <taxon>Pseudomonadati</taxon>
        <taxon>Pseudomonadota</taxon>
        <taxon>Gammaproteobacteria</taxon>
        <taxon>Pasteurellales</taxon>
        <taxon>Pasteurellaceae</taxon>
        <taxon>Actinobacillus</taxon>
    </lineage>
</organism>
<dbReference type="EMBL" id="CP000746">
    <property type="protein sequence ID" value="ABR74396.1"/>
    <property type="molecule type" value="Genomic_DNA"/>
</dbReference>
<dbReference type="RefSeq" id="WP_012072773.1">
    <property type="nucleotide sequence ID" value="NC_009655.1"/>
</dbReference>
<dbReference type="SMR" id="A6VN49"/>
<dbReference type="STRING" id="339671.Asuc_1030"/>
<dbReference type="KEGG" id="asu:Asuc_1030"/>
<dbReference type="eggNOG" id="COG0316">
    <property type="taxonomic scope" value="Bacteria"/>
</dbReference>
<dbReference type="HOGENOM" id="CLU_069054_5_3_6"/>
<dbReference type="OrthoDB" id="9801228at2"/>
<dbReference type="Proteomes" id="UP000001114">
    <property type="component" value="Chromosome"/>
</dbReference>
<dbReference type="GO" id="GO:0005829">
    <property type="term" value="C:cytosol"/>
    <property type="evidence" value="ECO:0007669"/>
    <property type="project" value="TreeGrafter"/>
</dbReference>
<dbReference type="GO" id="GO:0051537">
    <property type="term" value="F:2 iron, 2 sulfur cluster binding"/>
    <property type="evidence" value="ECO:0007669"/>
    <property type="project" value="TreeGrafter"/>
</dbReference>
<dbReference type="GO" id="GO:0051539">
    <property type="term" value="F:4 iron, 4 sulfur cluster binding"/>
    <property type="evidence" value="ECO:0007669"/>
    <property type="project" value="TreeGrafter"/>
</dbReference>
<dbReference type="GO" id="GO:0005506">
    <property type="term" value="F:iron ion binding"/>
    <property type="evidence" value="ECO:0007669"/>
    <property type="project" value="UniProtKB-UniRule"/>
</dbReference>
<dbReference type="GO" id="GO:0016226">
    <property type="term" value="P:iron-sulfur cluster assembly"/>
    <property type="evidence" value="ECO:0007669"/>
    <property type="project" value="UniProtKB-UniRule"/>
</dbReference>
<dbReference type="FunFam" id="2.60.300.12:FF:000002">
    <property type="entry name" value="Iron-sulfur cluster insertion protein ErpA"/>
    <property type="match status" value="1"/>
</dbReference>
<dbReference type="Gene3D" id="2.60.300.12">
    <property type="entry name" value="HesB-like domain"/>
    <property type="match status" value="1"/>
</dbReference>
<dbReference type="HAMAP" id="MF_01380">
    <property type="entry name" value="Fe_S_insert_ErpA"/>
    <property type="match status" value="1"/>
</dbReference>
<dbReference type="InterPro" id="IPR000361">
    <property type="entry name" value="FeS_biogenesis"/>
</dbReference>
<dbReference type="InterPro" id="IPR016092">
    <property type="entry name" value="FeS_cluster_insertion"/>
</dbReference>
<dbReference type="InterPro" id="IPR017870">
    <property type="entry name" value="FeS_cluster_insertion_CS"/>
</dbReference>
<dbReference type="InterPro" id="IPR023063">
    <property type="entry name" value="FeS_cluster_insertion_RrpA"/>
</dbReference>
<dbReference type="InterPro" id="IPR035903">
    <property type="entry name" value="HesB-like_dom_sf"/>
</dbReference>
<dbReference type="NCBIfam" id="TIGR00049">
    <property type="entry name" value="iron-sulfur cluster assembly accessory protein"/>
    <property type="match status" value="1"/>
</dbReference>
<dbReference type="NCBIfam" id="NF010147">
    <property type="entry name" value="PRK13623.1"/>
    <property type="match status" value="1"/>
</dbReference>
<dbReference type="PANTHER" id="PTHR43011">
    <property type="entry name" value="IRON-SULFUR CLUSTER ASSEMBLY 2 HOMOLOG, MITOCHONDRIAL"/>
    <property type="match status" value="1"/>
</dbReference>
<dbReference type="PANTHER" id="PTHR43011:SF1">
    <property type="entry name" value="IRON-SULFUR CLUSTER ASSEMBLY 2 HOMOLOG, MITOCHONDRIAL"/>
    <property type="match status" value="1"/>
</dbReference>
<dbReference type="Pfam" id="PF01521">
    <property type="entry name" value="Fe-S_biosyn"/>
    <property type="match status" value="1"/>
</dbReference>
<dbReference type="SUPFAM" id="SSF89360">
    <property type="entry name" value="HesB-like domain"/>
    <property type="match status" value="1"/>
</dbReference>
<dbReference type="PROSITE" id="PS01152">
    <property type="entry name" value="HESB"/>
    <property type="match status" value="1"/>
</dbReference>
<comment type="function">
    <text evidence="1">Required for insertion of 4Fe-4S clusters for at least IspG.</text>
</comment>
<comment type="cofactor">
    <cofactor evidence="1">
        <name>iron-sulfur cluster</name>
        <dbReference type="ChEBI" id="CHEBI:30408"/>
    </cofactor>
    <text evidence="1">Binds 1 iron-sulfur cluster per subunit.</text>
</comment>
<comment type="subunit">
    <text evidence="1">Homodimer.</text>
</comment>
<comment type="similarity">
    <text evidence="1">Belongs to the HesB/IscA family.</text>
</comment>
<protein>
    <recommendedName>
        <fullName evidence="1">Iron-sulfur cluster insertion protein ErpA</fullName>
    </recommendedName>
</protein>
<accession>A6VN49</accession>
<reference key="1">
    <citation type="journal article" date="2010" name="BMC Genomics">
        <title>A genomic perspective on the potential of Actinobacillus succinogenes for industrial succinate production.</title>
        <authorList>
            <person name="McKinlay J.B."/>
            <person name="Laivenieks M."/>
            <person name="Schindler B.D."/>
            <person name="McKinlay A.A."/>
            <person name="Siddaramappa S."/>
            <person name="Challacombe J.F."/>
            <person name="Lowry S.R."/>
            <person name="Clum A."/>
            <person name="Lapidus A.L."/>
            <person name="Burkhart K.B."/>
            <person name="Harkins V."/>
            <person name="Vieille C."/>
        </authorList>
    </citation>
    <scope>NUCLEOTIDE SEQUENCE [LARGE SCALE GENOMIC DNA]</scope>
    <source>
        <strain>ATCC 55618 / DSM 22257 / CCUG 43843 / 130Z</strain>
    </source>
</reference>